<sequence>MGIEEFGGGQAAQADVLVVTTNDVPGYQVTQVIGEVFGLTVRSRHLGSQIGAGLKSMIGGELKGLTKTLVETRNQAMERLVEQARARGANAVLMMRFDVTEAADVGTEVCAYGTAAVISKV</sequence>
<dbReference type="EMBL" id="AP009493">
    <property type="protein sequence ID" value="BAG20909.1"/>
    <property type="molecule type" value="Genomic_DNA"/>
</dbReference>
<dbReference type="RefSeq" id="WP_012380348.1">
    <property type="nucleotide sequence ID" value="NC_010572.1"/>
</dbReference>
<dbReference type="SMR" id="B1VSF5"/>
<dbReference type="KEGG" id="sgr:SGR_4080"/>
<dbReference type="eggNOG" id="COG0393">
    <property type="taxonomic scope" value="Bacteria"/>
</dbReference>
<dbReference type="HOGENOM" id="CLU_117144_1_1_11"/>
<dbReference type="Proteomes" id="UP000001685">
    <property type="component" value="Chromosome"/>
</dbReference>
<dbReference type="Gene3D" id="3.30.110.70">
    <property type="entry name" value="Hypothetical protein apc22750. Chain B"/>
    <property type="match status" value="1"/>
</dbReference>
<dbReference type="HAMAP" id="MF_00338">
    <property type="entry name" value="UPF0145"/>
    <property type="match status" value="1"/>
</dbReference>
<dbReference type="InterPro" id="IPR035439">
    <property type="entry name" value="UPF0145_dom_sf"/>
</dbReference>
<dbReference type="InterPro" id="IPR002765">
    <property type="entry name" value="UPF0145_YbjQ-like"/>
</dbReference>
<dbReference type="PANTHER" id="PTHR34068:SF2">
    <property type="entry name" value="UPF0145 PROTEIN SCO3412"/>
    <property type="match status" value="1"/>
</dbReference>
<dbReference type="PANTHER" id="PTHR34068">
    <property type="entry name" value="UPF0145 PROTEIN YBJQ"/>
    <property type="match status" value="1"/>
</dbReference>
<dbReference type="Pfam" id="PF01906">
    <property type="entry name" value="YbjQ_1"/>
    <property type="match status" value="1"/>
</dbReference>
<dbReference type="SUPFAM" id="SSF117782">
    <property type="entry name" value="YbjQ-like"/>
    <property type="match status" value="1"/>
</dbReference>
<gene>
    <name type="ordered locus">SGR_4080</name>
</gene>
<evidence type="ECO:0000255" key="1">
    <source>
        <dbReference type="HAMAP-Rule" id="MF_00338"/>
    </source>
</evidence>
<protein>
    <recommendedName>
        <fullName evidence="1">UPF0145 protein SGR_4080</fullName>
    </recommendedName>
</protein>
<reference key="1">
    <citation type="journal article" date="2008" name="J. Bacteriol.">
        <title>Genome sequence of the streptomycin-producing microorganism Streptomyces griseus IFO 13350.</title>
        <authorList>
            <person name="Ohnishi Y."/>
            <person name="Ishikawa J."/>
            <person name="Hara H."/>
            <person name="Suzuki H."/>
            <person name="Ikenoya M."/>
            <person name="Ikeda H."/>
            <person name="Yamashita A."/>
            <person name="Hattori M."/>
            <person name="Horinouchi S."/>
        </authorList>
    </citation>
    <scope>NUCLEOTIDE SEQUENCE [LARGE SCALE GENOMIC DNA]</scope>
    <source>
        <strain>JCM 4626 / CBS 651.72 / NBRC 13350 / KCC S-0626 / ISP 5235</strain>
    </source>
</reference>
<organism>
    <name type="scientific">Streptomyces griseus subsp. griseus (strain JCM 4626 / CBS 651.72 / NBRC 13350 / KCC S-0626 / ISP 5235)</name>
    <dbReference type="NCBI Taxonomy" id="455632"/>
    <lineage>
        <taxon>Bacteria</taxon>
        <taxon>Bacillati</taxon>
        <taxon>Actinomycetota</taxon>
        <taxon>Actinomycetes</taxon>
        <taxon>Kitasatosporales</taxon>
        <taxon>Streptomycetaceae</taxon>
        <taxon>Streptomyces</taxon>
    </lineage>
</organism>
<accession>B1VSF5</accession>
<comment type="similarity">
    <text evidence="1">Belongs to the UPF0145 family.</text>
</comment>
<name>Y4080_STRGG</name>
<proteinExistence type="inferred from homology"/>
<feature type="chain" id="PRO_1000120018" description="UPF0145 protein SGR_4080">
    <location>
        <begin position="1"/>
        <end position="121"/>
    </location>
</feature>